<comment type="function">
    <text evidence="1">3'-to-5' exoribonuclease specific for small oligoribonucleotides.</text>
</comment>
<comment type="subcellular location">
    <subcellularLocation>
        <location evidence="1">Cytoplasm</location>
    </subcellularLocation>
</comment>
<comment type="similarity">
    <text evidence="1">Belongs to the oligoribonuclease family.</text>
</comment>
<gene>
    <name evidence="1" type="primary">orn</name>
    <name type="ordered locus">Sama_3032</name>
</gene>
<accession>A1SA28</accession>
<evidence type="ECO:0000255" key="1">
    <source>
        <dbReference type="HAMAP-Rule" id="MF_00045"/>
    </source>
</evidence>
<keyword id="KW-0963">Cytoplasm</keyword>
<keyword id="KW-0269">Exonuclease</keyword>
<keyword id="KW-0378">Hydrolase</keyword>
<keyword id="KW-0540">Nuclease</keyword>
<keyword id="KW-1185">Reference proteome</keyword>
<sequence length="181" mass="20699">MAADAKNLIWIDLEMTGLEPEVDRILEIATLVTDQDLNILAQGPVIAIHQSDEVLAAMDDWNQQHHGASGLIERVRSSQYTEADAIAQTIDFLSLHVPKGVSPMCGNSVGQDRRFLNKYMRELEDFFHYRNIDVSTIKELVKRWDPEVMKGFKKQGTHQALLDIQESIAELQFYRDKVFKI</sequence>
<proteinExistence type="inferred from homology"/>
<protein>
    <recommendedName>
        <fullName evidence="1">Oligoribonuclease</fullName>
        <ecNumber evidence="1">3.1.15.-</ecNumber>
    </recommendedName>
</protein>
<dbReference type="EC" id="3.1.15.-" evidence="1"/>
<dbReference type="EMBL" id="CP000507">
    <property type="protein sequence ID" value="ABM01235.1"/>
    <property type="molecule type" value="Genomic_DNA"/>
</dbReference>
<dbReference type="RefSeq" id="WP_011761139.1">
    <property type="nucleotide sequence ID" value="NC_008700.1"/>
</dbReference>
<dbReference type="SMR" id="A1SA28"/>
<dbReference type="STRING" id="326297.Sama_3032"/>
<dbReference type="KEGG" id="saz:Sama_3032"/>
<dbReference type="eggNOG" id="COG1949">
    <property type="taxonomic scope" value="Bacteria"/>
</dbReference>
<dbReference type="HOGENOM" id="CLU_064761_2_0_6"/>
<dbReference type="OrthoDB" id="9801329at2"/>
<dbReference type="Proteomes" id="UP000009175">
    <property type="component" value="Chromosome"/>
</dbReference>
<dbReference type="GO" id="GO:0005737">
    <property type="term" value="C:cytoplasm"/>
    <property type="evidence" value="ECO:0007669"/>
    <property type="project" value="UniProtKB-SubCell"/>
</dbReference>
<dbReference type="GO" id="GO:0000175">
    <property type="term" value="F:3'-5'-RNA exonuclease activity"/>
    <property type="evidence" value="ECO:0007669"/>
    <property type="project" value="InterPro"/>
</dbReference>
<dbReference type="GO" id="GO:0003676">
    <property type="term" value="F:nucleic acid binding"/>
    <property type="evidence" value="ECO:0007669"/>
    <property type="project" value="InterPro"/>
</dbReference>
<dbReference type="GO" id="GO:0006259">
    <property type="term" value="P:DNA metabolic process"/>
    <property type="evidence" value="ECO:0007669"/>
    <property type="project" value="UniProtKB-ARBA"/>
</dbReference>
<dbReference type="CDD" id="cd06135">
    <property type="entry name" value="Orn"/>
    <property type="match status" value="1"/>
</dbReference>
<dbReference type="FunFam" id="3.30.420.10:FF:000003">
    <property type="entry name" value="Oligoribonuclease"/>
    <property type="match status" value="1"/>
</dbReference>
<dbReference type="Gene3D" id="3.30.420.10">
    <property type="entry name" value="Ribonuclease H-like superfamily/Ribonuclease H"/>
    <property type="match status" value="1"/>
</dbReference>
<dbReference type="HAMAP" id="MF_00045">
    <property type="entry name" value="Oligoribonuclease"/>
    <property type="match status" value="1"/>
</dbReference>
<dbReference type="InterPro" id="IPR013520">
    <property type="entry name" value="Exonuclease_RNaseT/DNA_pol3"/>
</dbReference>
<dbReference type="InterPro" id="IPR022894">
    <property type="entry name" value="Oligoribonuclease"/>
</dbReference>
<dbReference type="InterPro" id="IPR012337">
    <property type="entry name" value="RNaseH-like_sf"/>
</dbReference>
<dbReference type="InterPro" id="IPR036397">
    <property type="entry name" value="RNaseH_sf"/>
</dbReference>
<dbReference type="NCBIfam" id="NF003765">
    <property type="entry name" value="PRK05359.1"/>
    <property type="match status" value="1"/>
</dbReference>
<dbReference type="PANTHER" id="PTHR11046">
    <property type="entry name" value="OLIGORIBONUCLEASE, MITOCHONDRIAL"/>
    <property type="match status" value="1"/>
</dbReference>
<dbReference type="PANTHER" id="PTHR11046:SF0">
    <property type="entry name" value="OLIGORIBONUCLEASE, MITOCHONDRIAL"/>
    <property type="match status" value="1"/>
</dbReference>
<dbReference type="Pfam" id="PF00929">
    <property type="entry name" value="RNase_T"/>
    <property type="match status" value="1"/>
</dbReference>
<dbReference type="SMART" id="SM00479">
    <property type="entry name" value="EXOIII"/>
    <property type="match status" value="1"/>
</dbReference>
<dbReference type="SUPFAM" id="SSF53098">
    <property type="entry name" value="Ribonuclease H-like"/>
    <property type="match status" value="1"/>
</dbReference>
<reference key="1">
    <citation type="submission" date="2006-12" db="EMBL/GenBank/DDBJ databases">
        <title>Complete sequence of Shewanella amazonensis SB2B.</title>
        <authorList>
            <consortium name="US DOE Joint Genome Institute"/>
            <person name="Copeland A."/>
            <person name="Lucas S."/>
            <person name="Lapidus A."/>
            <person name="Barry K."/>
            <person name="Detter J.C."/>
            <person name="Glavina del Rio T."/>
            <person name="Hammon N."/>
            <person name="Israni S."/>
            <person name="Dalin E."/>
            <person name="Tice H."/>
            <person name="Pitluck S."/>
            <person name="Munk A.C."/>
            <person name="Brettin T."/>
            <person name="Bruce D."/>
            <person name="Han C."/>
            <person name="Tapia R."/>
            <person name="Gilna P."/>
            <person name="Schmutz J."/>
            <person name="Larimer F."/>
            <person name="Land M."/>
            <person name="Hauser L."/>
            <person name="Kyrpides N."/>
            <person name="Mikhailova N."/>
            <person name="Fredrickson J."/>
            <person name="Richardson P."/>
        </authorList>
    </citation>
    <scope>NUCLEOTIDE SEQUENCE [LARGE SCALE GENOMIC DNA]</scope>
    <source>
        <strain>ATCC BAA-1098 / SB2B</strain>
    </source>
</reference>
<name>ORN_SHEAM</name>
<feature type="chain" id="PRO_1000004282" description="Oligoribonuclease">
    <location>
        <begin position="1"/>
        <end position="181"/>
    </location>
</feature>
<feature type="domain" description="Exonuclease" evidence="1">
    <location>
        <begin position="8"/>
        <end position="171"/>
    </location>
</feature>
<feature type="active site" evidence="1">
    <location>
        <position position="129"/>
    </location>
</feature>
<organism>
    <name type="scientific">Shewanella amazonensis (strain ATCC BAA-1098 / SB2B)</name>
    <dbReference type="NCBI Taxonomy" id="326297"/>
    <lineage>
        <taxon>Bacteria</taxon>
        <taxon>Pseudomonadati</taxon>
        <taxon>Pseudomonadota</taxon>
        <taxon>Gammaproteobacteria</taxon>
        <taxon>Alteromonadales</taxon>
        <taxon>Shewanellaceae</taxon>
        <taxon>Shewanella</taxon>
    </lineage>
</organism>